<keyword id="KW-0002">3D-structure</keyword>
<keyword id="KW-0963">Cytoplasm</keyword>
<keyword id="KW-0479">Metal-binding</keyword>
<keyword id="KW-1185">Reference proteome</keyword>
<keyword id="KW-0687">Ribonucleoprotein</keyword>
<keyword id="KW-0689">Ribosomal protein</keyword>
<keyword id="KW-0862">Zinc</keyword>
<keyword id="KW-0863">Zinc-finger</keyword>
<evidence type="ECO:0000250" key="1">
    <source>
        <dbReference type="UniProtKB" id="P49166"/>
    </source>
</evidence>
<evidence type="ECO:0000269" key="2">
    <source>
    </source>
</evidence>
<evidence type="ECO:0000305" key="3"/>
<evidence type="ECO:0007744" key="4">
    <source>
        <dbReference type="PDB" id="7CPU"/>
    </source>
</evidence>
<evidence type="ECO:0007744" key="5">
    <source>
        <dbReference type="PDB" id="7CPV"/>
    </source>
</evidence>
<sequence>MAKRTKKVGIVGKYGTRYGASLRKMVKKIEISQHAKYTCSFCGKTKMKRRAVGIWHCGSCMKTVAGGAWTYNTTSAVTVKSAIRRLKELKDQ</sequence>
<organism>
    <name type="scientific">Mus musculus</name>
    <name type="common">Mouse</name>
    <dbReference type="NCBI Taxonomy" id="10090"/>
    <lineage>
        <taxon>Eukaryota</taxon>
        <taxon>Metazoa</taxon>
        <taxon>Chordata</taxon>
        <taxon>Craniata</taxon>
        <taxon>Vertebrata</taxon>
        <taxon>Euteleostomi</taxon>
        <taxon>Mammalia</taxon>
        <taxon>Eutheria</taxon>
        <taxon>Euarchontoglires</taxon>
        <taxon>Glires</taxon>
        <taxon>Rodentia</taxon>
        <taxon>Myomorpha</taxon>
        <taxon>Muroidea</taxon>
        <taxon>Muridae</taxon>
        <taxon>Murinae</taxon>
        <taxon>Mus</taxon>
        <taxon>Mus</taxon>
    </lineage>
</organism>
<proteinExistence type="evidence at protein level"/>
<name>RL37A_MOUSE</name>
<accession>P61514</accession>
<accession>P12751</accession>
<gene>
    <name type="primary">Rpl37a</name>
</gene>
<feature type="chain" id="PRO_0000139818" description="Large ribosomal subunit protein eL43">
    <location>
        <begin position="1"/>
        <end position="92"/>
    </location>
</feature>
<feature type="zinc finger region" description="C4-type">
    <location>
        <begin position="39"/>
        <end position="60"/>
    </location>
</feature>
<feature type="binding site" evidence="1">
    <location>
        <position position="39"/>
    </location>
    <ligand>
        <name>Zn(2+)</name>
        <dbReference type="ChEBI" id="CHEBI:29105"/>
    </ligand>
</feature>
<feature type="binding site" evidence="1">
    <location>
        <position position="42"/>
    </location>
    <ligand>
        <name>Zn(2+)</name>
        <dbReference type="ChEBI" id="CHEBI:29105"/>
    </ligand>
</feature>
<feature type="binding site" evidence="1">
    <location>
        <position position="57"/>
    </location>
    <ligand>
        <name>Zn(2+)</name>
        <dbReference type="ChEBI" id="CHEBI:29105"/>
    </ligand>
</feature>
<feature type="binding site" evidence="1">
    <location>
        <position position="60"/>
    </location>
    <ligand>
        <name>Zn(2+)</name>
        <dbReference type="ChEBI" id="CHEBI:29105"/>
    </ligand>
</feature>
<reference key="1">
    <citation type="journal article" date="1993" name="Nucleic Acids Res.">
        <title>Primary sequence of the mouse ribosomal protein L37a.</title>
        <authorList>
            <person name="Su Y."/>
            <person name="Babu N."/>
            <person name="Raj K."/>
            <person name="Au W.-C."/>
            <person name="Pitha P.M."/>
        </authorList>
    </citation>
    <scope>NUCLEOTIDE SEQUENCE [MRNA]</scope>
    <source>
        <strain>C57BL/6J</strain>
        <tissue>Spleen</tissue>
    </source>
</reference>
<reference key="2">
    <citation type="journal article" date="2005" name="Science">
        <title>The transcriptional landscape of the mammalian genome.</title>
        <authorList>
            <person name="Carninci P."/>
            <person name="Kasukawa T."/>
            <person name="Katayama S."/>
            <person name="Gough J."/>
            <person name="Frith M.C."/>
            <person name="Maeda N."/>
            <person name="Oyama R."/>
            <person name="Ravasi T."/>
            <person name="Lenhard B."/>
            <person name="Wells C."/>
            <person name="Kodzius R."/>
            <person name="Shimokawa K."/>
            <person name="Bajic V.B."/>
            <person name="Brenner S.E."/>
            <person name="Batalov S."/>
            <person name="Forrest A.R."/>
            <person name="Zavolan M."/>
            <person name="Davis M.J."/>
            <person name="Wilming L.G."/>
            <person name="Aidinis V."/>
            <person name="Allen J.E."/>
            <person name="Ambesi-Impiombato A."/>
            <person name="Apweiler R."/>
            <person name="Aturaliya R.N."/>
            <person name="Bailey T.L."/>
            <person name="Bansal M."/>
            <person name="Baxter L."/>
            <person name="Beisel K.W."/>
            <person name="Bersano T."/>
            <person name="Bono H."/>
            <person name="Chalk A.M."/>
            <person name="Chiu K.P."/>
            <person name="Choudhary V."/>
            <person name="Christoffels A."/>
            <person name="Clutterbuck D.R."/>
            <person name="Crowe M.L."/>
            <person name="Dalla E."/>
            <person name="Dalrymple B.P."/>
            <person name="de Bono B."/>
            <person name="Della Gatta G."/>
            <person name="di Bernardo D."/>
            <person name="Down T."/>
            <person name="Engstrom P."/>
            <person name="Fagiolini M."/>
            <person name="Faulkner G."/>
            <person name="Fletcher C.F."/>
            <person name="Fukushima T."/>
            <person name="Furuno M."/>
            <person name="Futaki S."/>
            <person name="Gariboldi M."/>
            <person name="Georgii-Hemming P."/>
            <person name="Gingeras T.R."/>
            <person name="Gojobori T."/>
            <person name="Green R.E."/>
            <person name="Gustincich S."/>
            <person name="Harbers M."/>
            <person name="Hayashi Y."/>
            <person name="Hensch T.K."/>
            <person name="Hirokawa N."/>
            <person name="Hill D."/>
            <person name="Huminiecki L."/>
            <person name="Iacono M."/>
            <person name="Ikeo K."/>
            <person name="Iwama A."/>
            <person name="Ishikawa T."/>
            <person name="Jakt M."/>
            <person name="Kanapin A."/>
            <person name="Katoh M."/>
            <person name="Kawasawa Y."/>
            <person name="Kelso J."/>
            <person name="Kitamura H."/>
            <person name="Kitano H."/>
            <person name="Kollias G."/>
            <person name="Krishnan S.P."/>
            <person name="Kruger A."/>
            <person name="Kummerfeld S.K."/>
            <person name="Kurochkin I.V."/>
            <person name="Lareau L.F."/>
            <person name="Lazarevic D."/>
            <person name="Lipovich L."/>
            <person name="Liu J."/>
            <person name="Liuni S."/>
            <person name="McWilliam S."/>
            <person name="Madan Babu M."/>
            <person name="Madera M."/>
            <person name="Marchionni L."/>
            <person name="Matsuda H."/>
            <person name="Matsuzawa S."/>
            <person name="Miki H."/>
            <person name="Mignone F."/>
            <person name="Miyake S."/>
            <person name="Morris K."/>
            <person name="Mottagui-Tabar S."/>
            <person name="Mulder N."/>
            <person name="Nakano N."/>
            <person name="Nakauchi H."/>
            <person name="Ng P."/>
            <person name="Nilsson R."/>
            <person name="Nishiguchi S."/>
            <person name="Nishikawa S."/>
            <person name="Nori F."/>
            <person name="Ohara O."/>
            <person name="Okazaki Y."/>
            <person name="Orlando V."/>
            <person name="Pang K.C."/>
            <person name="Pavan W.J."/>
            <person name="Pavesi G."/>
            <person name="Pesole G."/>
            <person name="Petrovsky N."/>
            <person name="Piazza S."/>
            <person name="Reed J."/>
            <person name="Reid J.F."/>
            <person name="Ring B.Z."/>
            <person name="Ringwald M."/>
            <person name="Rost B."/>
            <person name="Ruan Y."/>
            <person name="Salzberg S.L."/>
            <person name="Sandelin A."/>
            <person name="Schneider C."/>
            <person name="Schoenbach C."/>
            <person name="Sekiguchi K."/>
            <person name="Semple C.A."/>
            <person name="Seno S."/>
            <person name="Sessa L."/>
            <person name="Sheng Y."/>
            <person name="Shibata Y."/>
            <person name="Shimada H."/>
            <person name="Shimada K."/>
            <person name="Silva D."/>
            <person name="Sinclair B."/>
            <person name="Sperling S."/>
            <person name="Stupka E."/>
            <person name="Sugiura K."/>
            <person name="Sultana R."/>
            <person name="Takenaka Y."/>
            <person name="Taki K."/>
            <person name="Tammoja K."/>
            <person name="Tan S.L."/>
            <person name="Tang S."/>
            <person name="Taylor M.S."/>
            <person name="Tegner J."/>
            <person name="Teichmann S.A."/>
            <person name="Ueda H.R."/>
            <person name="van Nimwegen E."/>
            <person name="Verardo R."/>
            <person name="Wei C.L."/>
            <person name="Yagi K."/>
            <person name="Yamanishi H."/>
            <person name="Zabarovsky E."/>
            <person name="Zhu S."/>
            <person name="Zimmer A."/>
            <person name="Hide W."/>
            <person name="Bult C."/>
            <person name="Grimmond S.M."/>
            <person name="Teasdale R.D."/>
            <person name="Liu E.T."/>
            <person name="Brusic V."/>
            <person name="Quackenbush J."/>
            <person name="Wahlestedt C."/>
            <person name="Mattick J.S."/>
            <person name="Hume D.A."/>
            <person name="Kai C."/>
            <person name="Sasaki D."/>
            <person name="Tomaru Y."/>
            <person name="Fukuda S."/>
            <person name="Kanamori-Katayama M."/>
            <person name="Suzuki M."/>
            <person name="Aoki J."/>
            <person name="Arakawa T."/>
            <person name="Iida J."/>
            <person name="Imamura K."/>
            <person name="Itoh M."/>
            <person name="Kato T."/>
            <person name="Kawaji H."/>
            <person name="Kawagashira N."/>
            <person name="Kawashima T."/>
            <person name="Kojima M."/>
            <person name="Kondo S."/>
            <person name="Konno H."/>
            <person name="Nakano K."/>
            <person name="Ninomiya N."/>
            <person name="Nishio T."/>
            <person name="Okada M."/>
            <person name="Plessy C."/>
            <person name="Shibata K."/>
            <person name="Shiraki T."/>
            <person name="Suzuki S."/>
            <person name="Tagami M."/>
            <person name="Waki K."/>
            <person name="Watahiki A."/>
            <person name="Okamura-Oho Y."/>
            <person name="Suzuki H."/>
            <person name="Kawai J."/>
            <person name="Hayashizaki Y."/>
        </authorList>
    </citation>
    <scope>NUCLEOTIDE SEQUENCE [LARGE SCALE MRNA]</scope>
    <source>
        <strain>C57BL/6J</strain>
        <tissue>Head</tissue>
    </source>
</reference>
<reference key="3">
    <citation type="journal article" date="2010" name="Cell">
        <title>A tissue-specific atlas of mouse protein phosphorylation and expression.</title>
        <authorList>
            <person name="Huttlin E.L."/>
            <person name="Jedrychowski M.P."/>
            <person name="Elias J.E."/>
            <person name="Goswami T."/>
            <person name="Rad R."/>
            <person name="Beausoleil S.A."/>
            <person name="Villen J."/>
            <person name="Haas W."/>
            <person name="Sowa M.E."/>
            <person name="Gygi S.P."/>
        </authorList>
    </citation>
    <scope>IDENTIFICATION BY MASS SPECTROMETRY [LARGE SCALE ANALYSIS]</scope>
    <source>
        <tissue>Brain</tissue>
        <tissue>Brown adipose tissue</tissue>
        <tissue>Heart</tissue>
        <tissue>Kidney</tissue>
        <tissue>Liver</tissue>
        <tissue>Lung</tissue>
        <tissue>Pancreas</tissue>
        <tissue>Spleen</tissue>
        <tissue>Testis</tissue>
    </source>
</reference>
<reference evidence="4 5" key="4">
    <citation type="journal article" date="2022" name="Nature">
        <title>A male germ-cell-specific ribosome controls male fertility.</title>
        <authorList>
            <person name="Li H."/>
            <person name="Huo Y."/>
            <person name="He X."/>
            <person name="Yao L."/>
            <person name="Zhang H."/>
            <person name="Cui Y."/>
            <person name="Xiao H."/>
            <person name="Xie W."/>
            <person name="Zhang D."/>
            <person name="Wang Y."/>
            <person name="Zhang S."/>
            <person name="Tu H."/>
            <person name="Cheng Y."/>
            <person name="Guo Y."/>
            <person name="Cao X."/>
            <person name="Zhu Y."/>
            <person name="Jiang T."/>
            <person name="Guo X."/>
            <person name="Qin Y."/>
            <person name="Sha J."/>
        </authorList>
    </citation>
    <scope>STRUCTURE BY ELECTRON MICROSCOPY (3.03 ANGSTROMS) OF RIBOSOME</scope>
    <scope>FUNCTION</scope>
    <scope>SUBUNIT</scope>
    <scope>SUBCELLULAR LOCATION</scope>
</reference>
<dbReference type="EMBL" id="X73331">
    <property type="protein sequence ID" value="CAA51758.1"/>
    <property type="molecule type" value="mRNA"/>
</dbReference>
<dbReference type="EMBL" id="AK003501">
    <property type="protein sequence ID" value="BAB22825.1"/>
    <property type="molecule type" value="mRNA"/>
</dbReference>
<dbReference type="EMBL" id="AK011634">
    <property type="protein sequence ID" value="BAB27748.1"/>
    <property type="molecule type" value="mRNA"/>
</dbReference>
<dbReference type="EMBL" id="AK012396">
    <property type="protein sequence ID" value="BAB28213.1"/>
    <property type="molecule type" value="mRNA"/>
</dbReference>
<dbReference type="EMBL" id="AK012439">
    <property type="protein sequence ID" value="BAB28239.1"/>
    <property type="molecule type" value="mRNA"/>
</dbReference>
<dbReference type="EMBL" id="AK012655">
    <property type="protein sequence ID" value="BAB28386.1"/>
    <property type="molecule type" value="mRNA"/>
</dbReference>
<dbReference type="EMBL" id="AK014283">
    <property type="protein sequence ID" value="BAB29243.1"/>
    <property type="molecule type" value="mRNA"/>
</dbReference>
<dbReference type="CCDS" id="CCDS35610.1"/>
<dbReference type="PIR" id="S42109">
    <property type="entry name" value="S42109"/>
</dbReference>
<dbReference type="RefSeq" id="NP_033110.1">
    <property type="nucleotide sequence ID" value="NM_009084.5"/>
</dbReference>
<dbReference type="PDB" id="6SWA">
    <property type="method" value="EM"/>
    <property type="resolution" value="3.10 A"/>
    <property type="chains" value="n=1-92"/>
</dbReference>
<dbReference type="PDB" id="7CPU">
    <property type="method" value="EM"/>
    <property type="resolution" value="2.82 A"/>
    <property type="chains" value="Lp=1-92"/>
</dbReference>
<dbReference type="PDB" id="7CPV">
    <property type="method" value="EM"/>
    <property type="resolution" value="3.03 A"/>
    <property type="chains" value="Lp=1-92"/>
</dbReference>
<dbReference type="PDB" id="7LS1">
    <property type="method" value="EM"/>
    <property type="resolution" value="3.30 A"/>
    <property type="chains" value="j2=1-92"/>
</dbReference>
<dbReference type="PDB" id="7LS2">
    <property type="method" value="EM"/>
    <property type="resolution" value="3.10 A"/>
    <property type="chains" value="j2=1-92"/>
</dbReference>
<dbReference type="PDBsum" id="6SWA"/>
<dbReference type="PDBsum" id="7CPU"/>
<dbReference type="PDBsum" id="7CPV"/>
<dbReference type="PDBsum" id="7LS1"/>
<dbReference type="PDBsum" id="7LS2"/>
<dbReference type="EMDB" id="EMD-23500"/>
<dbReference type="EMDB" id="EMD-23501"/>
<dbReference type="EMDB" id="EMD-30432"/>
<dbReference type="EMDB" id="EMD-30433"/>
<dbReference type="SMR" id="P61514"/>
<dbReference type="BioGRID" id="202984">
    <property type="interactions" value="9"/>
</dbReference>
<dbReference type="ComplexPortal" id="CPX-5262">
    <property type="entry name" value="60S cytosolic large ribosomal subunit"/>
</dbReference>
<dbReference type="ComplexPortal" id="CPX-7662">
    <property type="entry name" value="60S cytosolic large ribosomal subunit, testis-specific variant"/>
</dbReference>
<dbReference type="ComplexPortal" id="CPX-7663">
    <property type="entry name" value="60S cytosolic large ribosomal subunit, striated muscle variant"/>
</dbReference>
<dbReference type="FunCoup" id="P61514">
    <property type="interactions" value="1331"/>
</dbReference>
<dbReference type="IntAct" id="P61514">
    <property type="interactions" value="1"/>
</dbReference>
<dbReference type="STRING" id="10090.ENSMUSP00000058919"/>
<dbReference type="GlyGen" id="P61514">
    <property type="glycosylation" value="1 site, 1 O-linked glycan (1 site)"/>
</dbReference>
<dbReference type="iPTMnet" id="P61514"/>
<dbReference type="PhosphoSitePlus" id="P61514"/>
<dbReference type="SwissPalm" id="P61514"/>
<dbReference type="jPOST" id="P61514"/>
<dbReference type="PaxDb" id="10090-ENSMUSP00000058919"/>
<dbReference type="PeptideAtlas" id="P61514"/>
<dbReference type="ProteomicsDB" id="299901"/>
<dbReference type="Pumba" id="P61514"/>
<dbReference type="TopDownProteomics" id="P61514"/>
<dbReference type="DNASU" id="19981"/>
<dbReference type="Ensembl" id="ENSMUST00000059980.11">
    <property type="protein sequence ID" value="ENSMUSP00000058919.10"/>
    <property type="gene ID" value="ENSMUSG00000046330.11"/>
</dbReference>
<dbReference type="GeneID" id="19981"/>
<dbReference type="KEGG" id="mmu:19981"/>
<dbReference type="UCSC" id="uc007bkv.2">
    <property type="organism name" value="mouse"/>
</dbReference>
<dbReference type="AGR" id="MGI:98068"/>
<dbReference type="CTD" id="6168"/>
<dbReference type="MGI" id="MGI:98068">
    <property type="gene designation" value="Rpl37a"/>
</dbReference>
<dbReference type="VEuPathDB" id="HostDB:ENSMUSG00000046330"/>
<dbReference type="eggNOG" id="KOG0402">
    <property type="taxonomic scope" value="Eukaryota"/>
</dbReference>
<dbReference type="GeneTree" id="ENSGT00390000016988"/>
<dbReference type="HOGENOM" id="CLU_141199_1_0_1"/>
<dbReference type="InParanoid" id="P61514"/>
<dbReference type="OMA" id="GPRYGRK"/>
<dbReference type="OrthoDB" id="10258345at2759"/>
<dbReference type="PhylomeDB" id="P61514"/>
<dbReference type="TreeFam" id="TF313068"/>
<dbReference type="Reactome" id="R-MMU-156827">
    <property type="pathway name" value="L13a-mediated translational silencing of Ceruloplasmin expression"/>
</dbReference>
<dbReference type="Reactome" id="R-MMU-1799339">
    <property type="pathway name" value="SRP-dependent cotranslational protein targeting to membrane"/>
</dbReference>
<dbReference type="Reactome" id="R-MMU-6791226">
    <property type="pathway name" value="Major pathway of rRNA processing in the nucleolus and cytosol"/>
</dbReference>
<dbReference type="Reactome" id="R-MMU-72689">
    <property type="pathway name" value="Formation of a pool of free 40S subunits"/>
</dbReference>
<dbReference type="Reactome" id="R-MMU-72706">
    <property type="pathway name" value="GTP hydrolysis and joining of the 60S ribosomal subunit"/>
</dbReference>
<dbReference type="Reactome" id="R-MMU-975956">
    <property type="pathway name" value="Nonsense Mediated Decay (NMD) independent of the Exon Junction Complex (EJC)"/>
</dbReference>
<dbReference type="Reactome" id="R-MMU-975957">
    <property type="pathway name" value="Nonsense Mediated Decay (NMD) enhanced by the Exon Junction Complex (EJC)"/>
</dbReference>
<dbReference type="BioGRID-ORCS" id="19981">
    <property type="hits" value="27 hits in 57 CRISPR screens"/>
</dbReference>
<dbReference type="ChiTaRS" id="Rpl37a">
    <property type="organism name" value="mouse"/>
</dbReference>
<dbReference type="PRO" id="PR:P61514"/>
<dbReference type="Proteomes" id="UP000000589">
    <property type="component" value="Chromosome 1"/>
</dbReference>
<dbReference type="RNAct" id="P61514">
    <property type="molecule type" value="protein"/>
</dbReference>
<dbReference type="Bgee" id="ENSMUSG00000046330">
    <property type="expression patterns" value="Expressed in yolk sac and 236 other cell types or tissues"/>
</dbReference>
<dbReference type="ExpressionAtlas" id="P61514">
    <property type="expression patterns" value="baseline and differential"/>
</dbReference>
<dbReference type="GO" id="GO:0005737">
    <property type="term" value="C:cytoplasm"/>
    <property type="evidence" value="ECO:0000314"/>
    <property type="project" value="ComplexPortal"/>
</dbReference>
<dbReference type="GO" id="GO:0005829">
    <property type="term" value="C:cytosol"/>
    <property type="evidence" value="ECO:0000304"/>
    <property type="project" value="Reactome"/>
</dbReference>
<dbReference type="GO" id="GO:0022625">
    <property type="term" value="C:cytosolic large ribosomal subunit"/>
    <property type="evidence" value="ECO:0000314"/>
    <property type="project" value="UniProtKB"/>
</dbReference>
<dbReference type="GO" id="GO:0098794">
    <property type="term" value="C:postsynapse"/>
    <property type="evidence" value="ECO:0000303"/>
    <property type="project" value="SynGO"/>
</dbReference>
<dbReference type="GO" id="GO:0098793">
    <property type="term" value="C:presynapse"/>
    <property type="evidence" value="ECO:0000303"/>
    <property type="project" value="SynGO"/>
</dbReference>
<dbReference type="GO" id="GO:0005840">
    <property type="term" value="C:ribosome"/>
    <property type="evidence" value="ECO:0000303"/>
    <property type="project" value="SynGO"/>
</dbReference>
<dbReference type="GO" id="GO:0045202">
    <property type="term" value="C:synapse"/>
    <property type="evidence" value="ECO:0000314"/>
    <property type="project" value="SynGO"/>
</dbReference>
<dbReference type="GO" id="GO:0003735">
    <property type="term" value="F:structural constituent of ribosome"/>
    <property type="evidence" value="ECO:0000314"/>
    <property type="project" value="UniProtKB"/>
</dbReference>
<dbReference type="GO" id="GO:0008270">
    <property type="term" value="F:zinc ion binding"/>
    <property type="evidence" value="ECO:0007669"/>
    <property type="project" value="UniProtKB-KW"/>
</dbReference>
<dbReference type="GO" id="GO:0002181">
    <property type="term" value="P:cytoplasmic translation"/>
    <property type="evidence" value="ECO:0000303"/>
    <property type="project" value="ComplexPortal"/>
</dbReference>
<dbReference type="GO" id="GO:0140242">
    <property type="term" value="P:translation at postsynapse"/>
    <property type="evidence" value="ECO:0000303"/>
    <property type="project" value="SynGO"/>
</dbReference>
<dbReference type="GO" id="GO:0140236">
    <property type="term" value="P:translation at presynapse"/>
    <property type="evidence" value="ECO:0000303"/>
    <property type="project" value="SynGO"/>
</dbReference>
<dbReference type="FunFam" id="2.20.25.30:FF:000002">
    <property type="entry name" value="60S ribosomal protein L37a"/>
    <property type="match status" value="1"/>
</dbReference>
<dbReference type="Gene3D" id="2.20.25.30">
    <property type="match status" value="1"/>
</dbReference>
<dbReference type="HAMAP" id="MF_00327">
    <property type="entry name" value="Ribosomal_eL43"/>
    <property type="match status" value="1"/>
</dbReference>
<dbReference type="InterPro" id="IPR011331">
    <property type="entry name" value="Ribosomal_eL37/eL43"/>
</dbReference>
<dbReference type="InterPro" id="IPR002674">
    <property type="entry name" value="Ribosomal_eL43"/>
</dbReference>
<dbReference type="InterPro" id="IPR011332">
    <property type="entry name" value="Ribosomal_zn-bd"/>
</dbReference>
<dbReference type="NCBIfam" id="TIGR00280">
    <property type="entry name" value="eL43_euk_arch"/>
    <property type="match status" value="1"/>
</dbReference>
<dbReference type="NCBIfam" id="NF003058">
    <property type="entry name" value="PRK03976.1"/>
    <property type="match status" value="1"/>
</dbReference>
<dbReference type="PANTHER" id="PTHR48188:SF2">
    <property type="entry name" value="60S RIBOSOMAL PROTEIN L37A"/>
    <property type="match status" value="1"/>
</dbReference>
<dbReference type="PANTHER" id="PTHR48188">
    <property type="entry name" value="60S RIBOSOMAL PROTEIN L43"/>
    <property type="match status" value="1"/>
</dbReference>
<dbReference type="Pfam" id="PF01780">
    <property type="entry name" value="Ribosomal_L37ae"/>
    <property type="match status" value="1"/>
</dbReference>
<dbReference type="SUPFAM" id="SSF57829">
    <property type="entry name" value="Zn-binding ribosomal proteins"/>
    <property type="match status" value="1"/>
</dbReference>
<comment type="function">
    <text evidence="2">Component of the large ribosomal subunit (PubMed:36517592). The ribosome is a large ribonucleoprotein complex responsible for the synthesis of proteins in the cell (PubMed:36517592).</text>
</comment>
<comment type="subunit">
    <text evidence="2">Component of the large ribosomal subunit.</text>
</comment>
<comment type="subcellular location">
    <subcellularLocation>
        <location evidence="2">Cytoplasm</location>
    </subcellularLocation>
</comment>
<comment type="similarity">
    <text evidence="3">Belongs to the eukaryotic ribosomal protein eL43 family.</text>
</comment>
<protein>
    <recommendedName>
        <fullName evidence="3">Large ribosomal subunit protein eL43</fullName>
    </recommendedName>
    <alternativeName>
        <fullName>60S ribosomal protein L37a</fullName>
    </alternativeName>
</protein>